<proteinExistence type="evidence at protein level"/>
<evidence type="ECO:0000250" key="1">
    <source>
        <dbReference type="UniProtKB" id="P9WK65"/>
    </source>
</evidence>
<evidence type="ECO:0000255" key="2">
    <source>
        <dbReference type="PROSITE-ProRule" id="PRU00303"/>
    </source>
</evidence>
<evidence type="ECO:0000269" key="3">
    <source>
    </source>
</evidence>
<evidence type="ECO:0000305" key="4"/>
<keyword id="KW-1003">Cell membrane</keyword>
<keyword id="KW-0134">Cell wall</keyword>
<keyword id="KW-0445">Lipid transport</keyword>
<keyword id="KW-0449">Lipoprotein</keyword>
<keyword id="KW-0472">Membrane</keyword>
<keyword id="KW-0564">Palmitate</keyword>
<keyword id="KW-0964">Secreted</keyword>
<keyword id="KW-0732">Signal</keyword>
<keyword id="KW-0813">Transport</keyword>
<reference key="1">
    <citation type="journal article" date="2007" name="Proc. Natl. Acad. Sci. U.S.A.">
        <title>Genome plasticity of BCG and impact on vaccine efficacy.</title>
        <authorList>
            <person name="Brosch R."/>
            <person name="Gordon S.V."/>
            <person name="Garnier T."/>
            <person name="Eiglmeier K."/>
            <person name="Frigui W."/>
            <person name="Valenti P."/>
            <person name="Dos Santos S."/>
            <person name="Duthoy S."/>
            <person name="Lacroix C."/>
            <person name="Garcia-Pelayo C."/>
            <person name="Inwald J.K."/>
            <person name="Golby P."/>
            <person name="Garcia J.N."/>
            <person name="Hewinson R.G."/>
            <person name="Behr M.A."/>
            <person name="Quail M.A."/>
            <person name="Churcher C."/>
            <person name="Barrell B.G."/>
            <person name="Parkhill J."/>
            <person name="Cole S.T."/>
        </authorList>
    </citation>
    <scope>NUCLEOTIDE SEQUENCE [LARGE SCALE GENOMIC DNA]</scope>
    <source>
        <strain>BCG / Pasteur 1173P2</strain>
    </source>
</reference>
<reference key="2">
    <citation type="journal article" date="2000" name="Infect. Immun.">
        <title>Cloning of the gene encoding a 22-kilodalton cell surface antigen of Mycobacterium bovis BCG and analysis of its potential for DNA vaccination against tuberculosis.</title>
        <authorList>
            <person name="Lefevre P."/>
            <person name="Denis O."/>
            <person name="De Wit L."/>
            <person name="Tanghe A."/>
            <person name="Vandenbussche P."/>
            <person name="Content J."/>
            <person name="Huygen K."/>
        </authorList>
    </citation>
    <scope>NUCLEOTIDE SEQUENCE [GENOMIC DNA] OF 121-233</scope>
    <scope>SUBCELLULAR LOCATION</scope>
    <scope>BIOTECHNOLOGY</scope>
    <source>
        <strain>BCG</strain>
    </source>
</reference>
<accession>A0A0H3MGR5</accession>
<accession>Q9RDW1</accession>
<name>LPPX_MYCBP</name>
<comment type="function">
    <text evidence="1">Might be involved in translocating phthiocerol dimycocerosates (PDIM) from the cell membrane to the outer membrane; PDIM forms part of the cell wall.</text>
</comment>
<comment type="subcellular location">
    <subcellularLocation>
        <location evidence="2 3">Cell membrane</location>
        <topology evidence="2">Lipid-anchor</topology>
    </subcellularLocation>
    <subcellularLocation>
        <location evidence="3">Cell surface</location>
    </subcellularLocation>
    <subcellularLocation>
        <location evidence="3">Secreted</location>
        <location evidence="3">Cell wall</location>
    </subcellularLocation>
    <subcellularLocation>
        <location evidence="3">Secreted</location>
    </subcellularLocation>
</comment>
<comment type="domain">
    <text evidence="1">Forms a U-shaped beta-half-barrel with a large hydrophobic cavity which is large enough to hold a single phthiocerol dimycocerosate (PDIM) molecule.</text>
</comment>
<comment type="PTM">
    <text evidence="1">Modified by Lgt on Cys-27 with an S-linked diacylglycerol with a mixture of C16 and C19 fatty acids (palmitic and tuberculostearic acid), signal peptide is removed by LspA, modified by Lnt with an amide-linked mixture of C16 and C19 fatty acids.</text>
</comment>
<comment type="biotechnology">
    <text evidence="3">Immunizing C57BL/6 and C3H mice with DNA encoding the mature protein induces antibody production after 3 weeks and stimulates cytokine production by mouse spleen cells; it does not however protect mice against infection 8 weeks later with M.tuberculosis H37Rv.</text>
</comment>
<comment type="similarity">
    <text evidence="4">Belongs to the LppX/LprAFG lipoprotein family.</text>
</comment>
<protein>
    <recommendedName>
        <fullName>Putative phthiocerol dimycocerosate transporter LppX</fullName>
    </recommendedName>
    <alternativeName>
        <fullName>Lipoprotein LppX</fullName>
    </alternativeName>
</protein>
<dbReference type="EMBL" id="AM408590">
    <property type="protein sequence ID" value="CAL72956.1"/>
    <property type="molecule type" value="Genomic_DNA"/>
</dbReference>
<dbReference type="EMBL" id="AJ238176">
    <property type="protein sequence ID" value="CAB65225.1"/>
    <property type="molecule type" value="Genomic_DNA"/>
</dbReference>
<dbReference type="RefSeq" id="WP_003414872.1">
    <property type="nucleotide sequence ID" value="NC_008769.1"/>
</dbReference>
<dbReference type="SMR" id="A0A0H3MGR5"/>
<dbReference type="KEGG" id="mbb:BCG_2967c"/>
<dbReference type="HOGENOM" id="CLU_1198710_0_0_11"/>
<dbReference type="Proteomes" id="UP000001472">
    <property type="component" value="Chromosome"/>
</dbReference>
<dbReference type="GO" id="GO:0009986">
    <property type="term" value="C:cell surface"/>
    <property type="evidence" value="ECO:0007669"/>
    <property type="project" value="UniProtKB-SubCell"/>
</dbReference>
<dbReference type="GO" id="GO:0005576">
    <property type="term" value="C:extracellular region"/>
    <property type="evidence" value="ECO:0007669"/>
    <property type="project" value="UniProtKB-SubCell"/>
</dbReference>
<dbReference type="GO" id="GO:0005886">
    <property type="term" value="C:plasma membrane"/>
    <property type="evidence" value="ECO:0007669"/>
    <property type="project" value="UniProtKB-SubCell"/>
</dbReference>
<dbReference type="GO" id="GO:0006869">
    <property type="term" value="P:lipid transport"/>
    <property type="evidence" value="ECO:0007669"/>
    <property type="project" value="UniProtKB-KW"/>
</dbReference>
<dbReference type="CDD" id="cd16334">
    <property type="entry name" value="LppX-like"/>
    <property type="match status" value="1"/>
</dbReference>
<dbReference type="Gene3D" id="2.50.20.20">
    <property type="match status" value="1"/>
</dbReference>
<dbReference type="InterPro" id="IPR029046">
    <property type="entry name" value="LolA/LolB/LppX"/>
</dbReference>
<dbReference type="InterPro" id="IPR009830">
    <property type="entry name" value="LppX/LprAFG"/>
</dbReference>
<dbReference type="Pfam" id="PF07161">
    <property type="entry name" value="LppX_LprAFG"/>
    <property type="match status" value="1"/>
</dbReference>
<dbReference type="SUPFAM" id="SSF89392">
    <property type="entry name" value="Prokaryotic lipoproteins and lipoprotein localization factors"/>
    <property type="match status" value="1"/>
</dbReference>
<dbReference type="PROSITE" id="PS51257">
    <property type="entry name" value="PROKAR_LIPOPROTEIN"/>
    <property type="match status" value="1"/>
</dbReference>
<feature type="signal peptide" evidence="2">
    <location>
        <begin position="1"/>
        <end position="26"/>
    </location>
</feature>
<feature type="chain" id="PRO_0000434586" description="Putative phthiocerol dimycocerosate transporter LppX">
    <location>
        <begin position="27"/>
        <end position="233"/>
    </location>
</feature>
<feature type="lipid moiety-binding region" description="N-palmitoyl cysteine" evidence="2">
    <location>
        <position position="27"/>
    </location>
</feature>
<feature type="lipid moiety-binding region" description="S-diacylglycerol cysteine" evidence="2">
    <location>
        <position position="27"/>
    </location>
</feature>
<feature type="sequence conflict" description="In Ref. 2; CAB65225." evidence="4" ref="2">
    <original>L</original>
    <variation>T</variation>
    <location>
        <position position="122"/>
    </location>
</feature>
<feature type="sequence conflict" description="In Ref. 2; CAB65225." evidence="4" ref="2">
    <original>L</original>
    <variation>R</variation>
    <location>
        <position position="129"/>
    </location>
</feature>
<gene>
    <name type="primary">lppX</name>
    <name type="ordered locus">BCG_2967c</name>
</gene>
<sequence length="233" mass="24140">MNDGKRAVTSAVLVVLGACLALWLSGCSSPKPDAEEQGVPVSPTASDPALLAEIRQSLDATKGLTSVHVAVRTTGKVDSLLGITSADVDVRANPLAAKGVCTYNDEQGVPFRVQGDNISVKLFDDWSNLGSISELSTSRVLDPAAGVTQLLSGVTNLQAQGTEVIDGISTTKITGTIPASSVKMLDPGAKSARPATVWIAQDGSHHLVRASIDLGSGSIQLTQSKWNEPVNVD</sequence>
<organism>
    <name type="scientific">Mycobacterium bovis (strain BCG / Pasteur 1173P2)</name>
    <dbReference type="NCBI Taxonomy" id="410289"/>
    <lineage>
        <taxon>Bacteria</taxon>
        <taxon>Bacillati</taxon>
        <taxon>Actinomycetota</taxon>
        <taxon>Actinomycetes</taxon>
        <taxon>Mycobacteriales</taxon>
        <taxon>Mycobacteriaceae</taxon>
        <taxon>Mycobacterium</taxon>
        <taxon>Mycobacterium tuberculosis complex</taxon>
    </lineage>
</organism>